<gene>
    <name evidence="1" type="primary">rplQ</name>
    <name type="ordered locus">NSE_0290</name>
</gene>
<protein>
    <recommendedName>
        <fullName evidence="1">Large ribosomal subunit protein bL17</fullName>
    </recommendedName>
    <alternativeName>
        <fullName evidence="2">50S ribosomal protein L17</fullName>
    </alternativeName>
</protein>
<comment type="subunit">
    <text evidence="1">Part of the 50S ribosomal subunit. Contacts protein L32.</text>
</comment>
<comment type="similarity">
    <text evidence="1">Belongs to the bacterial ribosomal protein bL17 family.</text>
</comment>
<dbReference type="EMBL" id="CP000237">
    <property type="protein sequence ID" value="ABD46299.1"/>
    <property type="molecule type" value="Genomic_DNA"/>
</dbReference>
<dbReference type="RefSeq" id="WP_011451687.1">
    <property type="nucleotide sequence ID" value="NC_007798.1"/>
</dbReference>
<dbReference type="SMR" id="Q2GEB5"/>
<dbReference type="STRING" id="222891.NSE_0290"/>
<dbReference type="KEGG" id="nse:NSE_0290"/>
<dbReference type="eggNOG" id="COG0203">
    <property type="taxonomic scope" value="Bacteria"/>
</dbReference>
<dbReference type="HOGENOM" id="CLU_074407_2_0_5"/>
<dbReference type="OrthoDB" id="9809073at2"/>
<dbReference type="Proteomes" id="UP000001942">
    <property type="component" value="Chromosome"/>
</dbReference>
<dbReference type="GO" id="GO:0022625">
    <property type="term" value="C:cytosolic large ribosomal subunit"/>
    <property type="evidence" value="ECO:0007669"/>
    <property type="project" value="TreeGrafter"/>
</dbReference>
<dbReference type="GO" id="GO:0003735">
    <property type="term" value="F:structural constituent of ribosome"/>
    <property type="evidence" value="ECO:0007669"/>
    <property type="project" value="InterPro"/>
</dbReference>
<dbReference type="GO" id="GO:0006412">
    <property type="term" value="P:translation"/>
    <property type="evidence" value="ECO:0007669"/>
    <property type="project" value="UniProtKB-UniRule"/>
</dbReference>
<dbReference type="Gene3D" id="3.90.1030.10">
    <property type="entry name" value="Ribosomal protein L17"/>
    <property type="match status" value="1"/>
</dbReference>
<dbReference type="HAMAP" id="MF_01368">
    <property type="entry name" value="Ribosomal_bL17"/>
    <property type="match status" value="1"/>
</dbReference>
<dbReference type="InterPro" id="IPR000456">
    <property type="entry name" value="Ribosomal_bL17"/>
</dbReference>
<dbReference type="InterPro" id="IPR047859">
    <property type="entry name" value="Ribosomal_bL17_CS"/>
</dbReference>
<dbReference type="InterPro" id="IPR036373">
    <property type="entry name" value="Ribosomal_bL17_sf"/>
</dbReference>
<dbReference type="NCBIfam" id="TIGR00059">
    <property type="entry name" value="L17"/>
    <property type="match status" value="1"/>
</dbReference>
<dbReference type="PANTHER" id="PTHR14413:SF16">
    <property type="entry name" value="LARGE RIBOSOMAL SUBUNIT PROTEIN BL17M"/>
    <property type="match status" value="1"/>
</dbReference>
<dbReference type="PANTHER" id="PTHR14413">
    <property type="entry name" value="RIBOSOMAL PROTEIN L17"/>
    <property type="match status" value="1"/>
</dbReference>
<dbReference type="Pfam" id="PF01196">
    <property type="entry name" value="Ribosomal_L17"/>
    <property type="match status" value="1"/>
</dbReference>
<dbReference type="SUPFAM" id="SSF64263">
    <property type="entry name" value="Prokaryotic ribosomal protein L17"/>
    <property type="match status" value="1"/>
</dbReference>
<dbReference type="PROSITE" id="PS01167">
    <property type="entry name" value="RIBOSOMAL_L17"/>
    <property type="match status" value="1"/>
</dbReference>
<organism>
    <name type="scientific">Neorickettsia sennetsu (strain ATCC VR-367 / Miyayama)</name>
    <name type="common">Ehrlichia sennetsu</name>
    <dbReference type="NCBI Taxonomy" id="222891"/>
    <lineage>
        <taxon>Bacteria</taxon>
        <taxon>Pseudomonadati</taxon>
        <taxon>Pseudomonadota</taxon>
        <taxon>Alphaproteobacteria</taxon>
        <taxon>Rickettsiales</taxon>
        <taxon>Anaplasmataceae</taxon>
        <taxon>Neorickettsia</taxon>
    </lineage>
</organism>
<proteinExistence type="inferred from homology"/>
<feature type="chain" id="PRO_1000055890" description="Large ribosomal subunit protein bL17">
    <location>
        <begin position="1"/>
        <end position="117"/>
    </location>
</feature>
<evidence type="ECO:0000255" key="1">
    <source>
        <dbReference type="HAMAP-Rule" id="MF_01368"/>
    </source>
</evidence>
<evidence type="ECO:0000305" key="2"/>
<name>RL17_NEOSM</name>
<reference key="1">
    <citation type="journal article" date="2006" name="PLoS Genet.">
        <title>Comparative genomics of emerging human ehrlichiosis agents.</title>
        <authorList>
            <person name="Dunning Hotopp J.C."/>
            <person name="Lin M."/>
            <person name="Madupu R."/>
            <person name="Crabtree J."/>
            <person name="Angiuoli S.V."/>
            <person name="Eisen J.A."/>
            <person name="Seshadri R."/>
            <person name="Ren Q."/>
            <person name="Wu M."/>
            <person name="Utterback T.R."/>
            <person name="Smith S."/>
            <person name="Lewis M."/>
            <person name="Khouri H."/>
            <person name="Zhang C."/>
            <person name="Niu H."/>
            <person name="Lin Q."/>
            <person name="Ohashi N."/>
            <person name="Zhi N."/>
            <person name="Nelson W.C."/>
            <person name="Brinkac L.M."/>
            <person name="Dodson R.J."/>
            <person name="Rosovitz M.J."/>
            <person name="Sundaram J.P."/>
            <person name="Daugherty S.C."/>
            <person name="Davidsen T."/>
            <person name="Durkin A.S."/>
            <person name="Gwinn M.L."/>
            <person name="Haft D.H."/>
            <person name="Selengut J.D."/>
            <person name="Sullivan S.A."/>
            <person name="Zafar N."/>
            <person name="Zhou L."/>
            <person name="Benahmed F."/>
            <person name="Forberger H."/>
            <person name="Halpin R."/>
            <person name="Mulligan S."/>
            <person name="Robinson J."/>
            <person name="White O."/>
            <person name="Rikihisa Y."/>
            <person name="Tettelin H."/>
        </authorList>
    </citation>
    <scope>NUCLEOTIDE SEQUENCE [LARGE SCALE GENOMIC DNA]</scope>
    <source>
        <strain>ATCC VR-367 / Miyayama</strain>
    </source>
</reference>
<accession>Q2GEB5</accession>
<keyword id="KW-0687">Ribonucleoprotein</keyword>
<keyword id="KW-0689">Ribosomal protein</keyword>
<sequence>MKHRVKKHRLSRNSSHRMSLICNLSVSIIEHGRLQTTLAKARALRPFIEKLITKARVPDSLSVRRLLLSRIKNEAAVTKLINEVARRYTDRPGGYCRIVKTGYRVGDAAPMAIIEFV</sequence>